<gene>
    <name evidence="1" type="primary">fumC</name>
    <name type="ordered locus">BA_1767</name>
    <name type="ordered locus">GBAA_1767</name>
    <name type="ordered locus">BAS1637</name>
</gene>
<sequence length="462" mass="50345">MEYRIERDTLGEIKVPADKLWAAQTQRSKENFPIGTEQMPLEIVKAFAILKKSAALSNQKLGKLSEEKAEAIVVAADEIIAGKWNEHFPLVVWQTGSGTQSNMNVNEVIANRGNQILKEKGSDVHIHPNDDVNMSQSSNDTFPTALHVACVLAVENHVLPAITKLKETLAEKVTAFEHIIKIGRTHLQDATPLTLGQEISGWHRMLEKTERMIAESNTYMKELAIGGTAVGTGINAHPKFGEMVSEEISQFTGKQFISAPNKFHALTSHDEVVYTHGALKALAADLMKIANDVRWLASGPRSGLGEIIIPANEPGSSIMPGKVNPTQSEALTMVVAQVMGNDATIGFAASQGNFELNVFKPVIAYNFLQSAHLLADAIVSFNDNCAVGIEADEEIIKENVNRSLMLVTALNPHIGYENAAKIAKHAHKEGLTLKEAALQSGLLTEEQFNEIVDPKKMIAPKE</sequence>
<proteinExistence type="inferred from homology"/>
<reference key="1">
    <citation type="journal article" date="2003" name="Nature">
        <title>The genome sequence of Bacillus anthracis Ames and comparison to closely related bacteria.</title>
        <authorList>
            <person name="Read T.D."/>
            <person name="Peterson S.N."/>
            <person name="Tourasse N.J."/>
            <person name="Baillie L.W."/>
            <person name="Paulsen I.T."/>
            <person name="Nelson K.E."/>
            <person name="Tettelin H."/>
            <person name="Fouts D.E."/>
            <person name="Eisen J.A."/>
            <person name="Gill S.R."/>
            <person name="Holtzapple E.K."/>
            <person name="Okstad O.A."/>
            <person name="Helgason E."/>
            <person name="Rilstone J."/>
            <person name="Wu M."/>
            <person name="Kolonay J.F."/>
            <person name="Beanan M.J."/>
            <person name="Dodson R.J."/>
            <person name="Brinkac L.M."/>
            <person name="Gwinn M.L."/>
            <person name="DeBoy R.T."/>
            <person name="Madpu R."/>
            <person name="Daugherty S.C."/>
            <person name="Durkin A.S."/>
            <person name="Haft D.H."/>
            <person name="Nelson W.C."/>
            <person name="Peterson J.D."/>
            <person name="Pop M."/>
            <person name="Khouri H.M."/>
            <person name="Radune D."/>
            <person name="Benton J.L."/>
            <person name="Mahamoud Y."/>
            <person name="Jiang L."/>
            <person name="Hance I.R."/>
            <person name="Weidman J.F."/>
            <person name="Berry K.J."/>
            <person name="Plaut R.D."/>
            <person name="Wolf A.M."/>
            <person name="Watkins K.L."/>
            <person name="Nierman W.C."/>
            <person name="Hazen A."/>
            <person name="Cline R.T."/>
            <person name="Redmond C."/>
            <person name="Thwaite J.E."/>
            <person name="White O."/>
            <person name="Salzberg S.L."/>
            <person name="Thomason B."/>
            <person name="Friedlander A.M."/>
            <person name="Koehler T.M."/>
            <person name="Hanna P.C."/>
            <person name="Kolstoe A.-B."/>
            <person name="Fraser C.M."/>
        </authorList>
    </citation>
    <scope>NUCLEOTIDE SEQUENCE [LARGE SCALE GENOMIC DNA]</scope>
    <source>
        <strain>Ames / isolate Porton</strain>
    </source>
</reference>
<reference key="2">
    <citation type="journal article" date="2009" name="J. Bacteriol.">
        <title>The complete genome sequence of Bacillus anthracis Ames 'Ancestor'.</title>
        <authorList>
            <person name="Ravel J."/>
            <person name="Jiang L."/>
            <person name="Stanley S.T."/>
            <person name="Wilson M.R."/>
            <person name="Decker R.S."/>
            <person name="Read T.D."/>
            <person name="Worsham P."/>
            <person name="Keim P.S."/>
            <person name="Salzberg S.L."/>
            <person name="Fraser-Liggett C.M."/>
            <person name="Rasko D.A."/>
        </authorList>
    </citation>
    <scope>NUCLEOTIDE SEQUENCE [LARGE SCALE GENOMIC DNA]</scope>
    <source>
        <strain>Ames ancestor</strain>
    </source>
</reference>
<reference key="3">
    <citation type="submission" date="2004-01" db="EMBL/GenBank/DDBJ databases">
        <title>Complete genome sequence of Bacillus anthracis Sterne.</title>
        <authorList>
            <person name="Brettin T.S."/>
            <person name="Bruce D."/>
            <person name="Challacombe J.F."/>
            <person name="Gilna P."/>
            <person name="Han C."/>
            <person name="Hill K."/>
            <person name="Hitchcock P."/>
            <person name="Jackson P."/>
            <person name="Keim P."/>
            <person name="Longmire J."/>
            <person name="Lucas S."/>
            <person name="Okinaka R."/>
            <person name="Richardson P."/>
            <person name="Rubin E."/>
            <person name="Tice H."/>
        </authorList>
    </citation>
    <scope>NUCLEOTIDE SEQUENCE [LARGE SCALE GENOMIC DNA]</scope>
    <source>
        <strain>Sterne</strain>
    </source>
</reference>
<name>FUMC_BACAN</name>
<feature type="chain" id="PRO_0000161252" description="Fumarate hydratase class II">
    <location>
        <begin position="1"/>
        <end position="462"/>
    </location>
</feature>
<feature type="active site" description="Proton donor/acceptor" evidence="1">
    <location>
        <position position="186"/>
    </location>
</feature>
<feature type="active site" evidence="1">
    <location>
        <position position="316"/>
    </location>
</feature>
<feature type="binding site" evidence="1">
    <location>
        <begin position="97"/>
        <end position="99"/>
    </location>
    <ligand>
        <name>substrate</name>
    </ligand>
</feature>
<feature type="binding site" description="in site B" evidence="1">
    <location>
        <begin position="127"/>
        <end position="130"/>
    </location>
    <ligand>
        <name>substrate</name>
    </ligand>
</feature>
<feature type="binding site" evidence="1">
    <location>
        <begin position="137"/>
        <end position="139"/>
    </location>
    <ligand>
        <name>substrate</name>
    </ligand>
</feature>
<feature type="binding site" evidence="1">
    <location>
        <position position="185"/>
    </location>
    <ligand>
        <name>substrate</name>
    </ligand>
</feature>
<feature type="binding site" evidence="1">
    <location>
        <position position="317"/>
    </location>
    <ligand>
        <name>substrate</name>
    </ligand>
</feature>
<feature type="binding site" evidence="1">
    <location>
        <begin position="322"/>
        <end position="324"/>
    </location>
    <ligand>
        <name>substrate</name>
    </ligand>
</feature>
<feature type="site" description="Important for catalytic activity" evidence="1">
    <location>
        <position position="329"/>
    </location>
</feature>
<accession>Q81SA0</accession>
<accession>Q6I0I3</accession>
<accession>Q6KUE7</accession>
<keyword id="KW-0963">Cytoplasm</keyword>
<keyword id="KW-0456">Lyase</keyword>
<keyword id="KW-1185">Reference proteome</keyword>
<keyword id="KW-0816">Tricarboxylic acid cycle</keyword>
<protein>
    <recommendedName>
        <fullName evidence="1">Fumarate hydratase class II</fullName>
        <shortName evidence="1">Fumarase C</shortName>
        <ecNumber evidence="1">4.2.1.2</ecNumber>
    </recommendedName>
    <alternativeName>
        <fullName evidence="1">Aerobic fumarase</fullName>
    </alternativeName>
    <alternativeName>
        <fullName evidence="1">Iron-independent fumarase</fullName>
    </alternativeName>
</protein>
<comment type="function">
    <text evidence="1">Involved in the TCA cycle. Catalyzes the stereospecific interconversion of fumarate to L-malate.</text>
</comment>
<comment type="catalytic activity">
    <reaction evidence="1">
        <text>(S)-malate = fumarate + H2O</text>
        <dbReference type="Rhea" id="RHEA:12460"/>
        <dbReference type="ChEBI" id="CHEBI:15377"/>
        <dbReference type="ChEBI" id="CHEBI:15589"/>
        <dbReference type="ChEBI" id="CHEBI:29806"/>
        <dbReference type="EC" id="4.2.1.2"/>
    </reaction>
</comment>
<comment type="pathway">
    <text evidence="1">Carbohydrate metabolism; tricarboxylic acid cycle; (S)-malate from fumarate: step 1/1.</text>
</comment>
<comment type="subunit">
    <text evidence="1">Homotetramer.</text>
</comment>
<comment type="subcellular location">
    <subcellularLocation>
        <location evidence="1">Cytoplasm</location>
    </subcellularLocation>
</comment>
<comment type="miscellaneous">
    <text evidence="1">There are 2 substrate-binding sites: the catalytic A site, and the non-catalytic B site that may play a role in the transfer of substrate or product between the active site and the solvent. Alternatively, the B site may bind allosteric effectors.</text>
</comment>
<comment type="similarity">
    <text evidence="1">Belongs to the class-II fumarase/aspartase family. Fumarase subfamily.</text>
</comment>
<dbReference type="EC" id="4.2.1.2" evidence="1"/>
<dbReference type="EMBL" id="AE016879">
    <property type="protein sequence ID" value="AAP25681.1"/>
    <property type="molecule type" value="Genomic_DNA"/>
</dbReference>
<dbReference type="EMBL" id="AE017334">
    <property type="protein sequence ID" value="AAT30883.1"/>
    <property type="molecule type" value="Genomic_DNA"/>
</dbReference>
<dbReference type="EMBL" id="AE017225">
    <property type="protein sequence ID" value="AAT53954.1"/>
    <property type="molecule type" value="Genomic_DNA"/>
</dbReference>
<dbReference type="RefSeq" id="NP_844195.1">
    <property type="nucleotide sequence ID" value="NC_003997.3"/>
</dbReference>
<dbReference type="RefSeq" id="WP_000456617.1">
    <property type="nucleotide sequence ID" value="NZ_WXXJ01000017.1"/>
</dbReference>
<dbReference type="RefSeq" id="YP_027903.1">
    <property type="nucleotide sequence ID" value="NC_005945.1"/>
</dbReference>
<dbReference type="SMR" id="Q81SA0"/>
<dbReference type="STRING" id="261594.GBAA_1767"/>
<dbReference type="DNASU" id="1086574"/>
<dbReference type="GeneID" id="45021714"/>
<dbReference type="KEGG" id="ban:BA_1767"/>
<dbReference type="KEGG" id="bar:GBAA_1767"/>
<dbReference type="KEGG" id="bat:BAS1637"/>
<dbReference type="PATRIC" id="fig|198094.11.peg.1739"/>
<dbReference type="eggNOG" id="COG0114">
    <property type="taxonomic scope" value="Bacteria"/>
</dbReference>
<dbReference type="HOGENOM" id="CLU_021594_4_1_9"/>
<dbReference type="OMA" id="AKWRAQT"/>
<dbReference type="OrthoDB" id="9802809at2"/>
<dbReference type="UniPathway" id="UPA00223">
    <property type="reaction ID" value="UER01007"/>
</dbReference>
<dbReference type="Proteomes" id="UP000000427">
    <property type="component" value="Chromosome"/>
</dbReference>
<dbReference type="Proteomes" id="UP000000594">
    <property type="component" value="Chromosome"/>
</dbReference>
<dbReference type="GO" id="GO:0005737">
    <property type="term" value="C:cytoplasm"/>
    <property type="evidence" value="ECO:0007669"/>
    <property type="project" value="UniProtKB-SubCell"/>
</dbReference>
<dbReference type="GO" id="GO:0004333">
    <property type="term" value="F:fumarate hydratase activity"/>
    <property type="evidence" value="ECO:0007669"/>
    <property type="project" value="UniProtKB-UniRule"/>
</dbReference>
<dbReference type="GO" id="GO:0006106">
    <property type="term" value="P:fumarate metabolic process"/>
    <property type="evidence" value="ECO:0007669"/>
    <property type="project" value="InterPro"/>
</dbReference>
<dbReference type="GO" id="GO:0006108">
    <property type="term" value="P:malate metabolic process"/>
    <property type="evidence" value="ECO:0007669"/>
    <property type="project" value="TreeGrafter"/>
</dbReference>
<dbReference type="GO" id="GO:0006099">
    <property type="term" value="P:tricarboxylic acid cycle"/>
    <property type="evidence" value="ECO:0007669"/>
    <property type="project" value="UniProtKB-UniRule"/>
</dbReference>
<dbReference type="CDD" id="cd01362">
    <property type="entry name" value="Fumarase_classII"/>
    <property type="match status" value="1"/>
</dbReference>
<dbReference type="FunFam" id="1.10.40.30:FF:000002">
    <property type="entry name" value="Fumarate hydratase class II"/>
    <property type="match status" value="1"/>
</dbReference>
<dbReference type="FunFam" id="1.10.275.10:FF:000001">
    <property type="entry name" value="Fumarate hydratase, mitochondrial"/>
    <property type="match status" value="1"/>
</dbReference>
<dbReference type="FunFam" id="1.20.200.10:FF:000001">
    <property type="entry name" value="Fumarate hydratase, mitochondrial"/>
    <property type="match status" value="1"/>
</dbReference>
<dbReference type="Gene3D" id="1.10.40.30">
    <property type="entry name" value="Fumarase/aspartase (C-terminal domain)"/>
    <property type="match status" value="1"/>
</dbReference>
<dbReference type="Gene3D" id="1.20.200.10">
    <property type="entry name" value="Fumarase/aspartase (Central domain)"/>
    <property type="match status" value="1"/>
</dbReference>
<dbReference type="Gene3D" id="1.10.275.10">
    <property type="entry name" value="Fumarase/aspartase (N-terminal domain)"/>
    <property type="match status" value="1"/>
</dbReference>
<dbReference type="HAMAP" id="MF_00743">
    <property type="entry name" value="FumaraseC"/>
    <property type="match status" value="1"/>
</dbReference>
<dbReference type="InterPro" id="IPR005677">
    <property type="entry name" value="Fum_hydII"/>
</dbReference>
<dbReference type="InterPro" id="IPR024083">
    <property type="entry name" value="Fumarase/histidase_N"/>
</dbReference>
<dbReference type="InterPro" id="IPR018951">
    <property type="entry name" value="Fumarase_C_C"/>
</dbReference>
<dbReference type="InterPro" id="IPR020557">
    <property type="entry name" value="Fumarate_lyase_CS"/>
</dbReference>
<dbReference type="InterPro" id="IPR000362">
    <property type="entry name" value="Fumarate_lyase_fam"/>
</dbReference>
<dbReference type="InterPro" id="IPR022761">
    <property type="entry name" value="Fumarate_lyase_N"/>
</dbReference>
<dbReference type="InterPro" id="IPR008948">
    <property type="entry name" value="L-Aspartase-like"/>
</dbReference>
<dbReference type="NCBIfam" id="TIGR00979">
    <property type="entry name" value="fumC_II"/>
    <property type="match status" value="1"/>
</dbReference>
<dbReference type="NCBIfam" id="NF008909">
    <property type="entry name" value="PRK12273.1"/>
    <property type="match status" value="1"/>
</dbReference>
<dbReference type="PANTHER" id="PTHR11444">
    <property type="entry name" value="ASPARTATEAMMONIA/ARGININOSUCCINATE/ADENYLOSUCCINATE LYASE"/>
    <property type="match status" value="1"/>
</dbReference>
<dbReference type="PANTHER" id="PTHR11444:SF1">
    <property type="entry name" value="FUMARATE HYDRATASE, MITOCHONDRIAL"/>
    <property type="match status" value="1"/>
</dbReference>
<dbReference type="Pfam" id="PF10415">
    <property type="entry name" value="FumaraseC_C"/>
    <property type="match status" value="1"/>
</dbReference>
<dbReference type="Pfam" id="PF00206">
    <property type="entry name" value="Lyase_1"/>
    <property type="match status" value="1"/>
</dbReference>
<dbReference type="PRINTS" id="PR00149">
    <property type="entry name" value="FUMRATELYASE"/>
</dbReference>
<dbReference type="SUPFAM" id="SSF48557">
    <property type="entry name" value="L-aspartase-like"/>
    <property type="match status" value="1"/>
</dbReference>
<dbReference type="PROSITE" id="PS00163">
    <property type="entry name" value="FUMARATE_LYASES"/>
    <property type="match status" value="1"/>
</dbReference>
<organism>
    <name type="scientific">Bacillus anthracis</name>
    <dbReference type="NCBI Taxonomy" id="1392"/>
    <lineage>
        <taxon>Bacteria</taxon>
        <taxon>Bacillati</taxon>
        <taxon>Bacillota</taxon>
        <taxon>Bacilli</taxon>
        <taxon>Bacillales</taxon>
        <taxon>Bacillaceae</taxon>
        <taxon>Bacillus</taxon>
        <taxon>Bacillus cereus group</taxon>
    </lineage>
</organism>
<evidence type="ECO:0000255" key="1">
    <source>
        <dbReference type="HAMAP-Rule" id="MF_00743"/>
    </source>
</evidence>